<comment type="function">
    <text evidence="3 4">Catalyzes the methylation of glycine by using S-adenosylmethionine (AdoMet) to form N-methylglycine (sarcosine) with the concomitant production of S-adenosylhomocysteine (AdoHcy), a reaction regulated by the binding of 5-methyltetrahydrofolate (PubMed:15340920). Plays an important role in the regulation of methyl group metabolism by regulating the ratio between S-adenosyl-L-methionine and S-adenosyl-L-homocysteine (PubMed:16779654).</text>
</comment>
<comment type="catalytic activity">
    <reaction evidence="3">
        <text>glycine + S-adenosyl-L-methionine = sarcosine + S-adenosyl-L-homocysteine + H(+)</text>
        <dbReference type="Rhea" id="RHEA:19937"/>
        <dbReference type="ChEBI" id="CHEBI:15378"/>
        <dbReference type="ChEBI" id="CHEBI:57305"/>
        <dbReference type="ChEBI" id="CHEBI:57433"/>
        <dbReference type="ChEBI" id="CHEBI:57856"/>
        <dbReference type="ChEBI" id="CHEBI:59789"/>
        <dbReference type="EC" id="2.1.1.20"/>
    </reaction>
    <physiologicalReaction direction="left-to-right" evidence="6">
        <dbReference type="Rhea" id="RHEA:19938"/>
    </physiologicalReaction>
</comment>
<comment type="activity regulation">
    <text evidence="1">Inhibited by 5-methyltetrahydrofolate monoglutamate and by 5-methyltetrahydrofolate pentaglutamate, inhibition is much more effective by the pentaglutamate form than by the monoglutamate form. Two molecules of 5-methyltetrahydrofolate are bound per tetramer. The binding sites are localized between subunits. Inhibitor binding may preclude movements of the polypeptide chain that are necessary for enzyme activity.</text>
</comment>
<comment type="biophysicochemical properties">
    <kinetics>
        <KM evidence="3">180 uM for S-adenosyl-L-methionine</KM>
        <KM evidence="3">3.6 mM for glycine</KM>
    </kinetics>
</comment>
<comment type="subunit">
    <text evidence="3">Homotetramer.</text>
</comment>
<comment type="subcellular location">
    <subcellularLocation>
        <location evidence="1">Cytoplasm</location>
    </subcellularLocation>
</comment>
<comment type="disruption phenotype">
    <text evidence="4">Deficient mice are fertile and display elevated levels of methionine and S-adenosylmethionine in the liver. At 3 and 8 months of age, the livers at 3 and 8 months of age show evidence of fatty accumulation and fibrosis that worsen progressively.</text>
</comment>
<comment type="similarity">
    <text evidence="2">Belongs to the class I-like SAM-binding methyltransferase superfamily. Glycine N-methyltransferase family.</text>
</comment>
<sequence>MVDSVYRTRSLGVAAEGLPDQYADGEAARVWQLYIGDTRSRTAEYKAWLLGLLRQHGCHRVLDVACGTGVDSIMLVEEGFSVMSVDASDKMLKYALKERWNRRKEPSFDNWVIEEANWLTLDKDVLSGDGFDAVICLGNSFAHLPDCKGDQSEHRLALKNIASMVRPGGLLVIDHRNYDYILSTGCAPPGKNIYYKSDLTKDITTSVLTVNNKAHMVTLDYTVQVPGTGRDGSPGFSKFRLSYYPHCLASFTELVRAAFGGRCQHSVLGDFKPYKPGQAYVPCYFIHVLKKTD</sequence>
<reference key="1">
    <citation type="journal article" date="1997" name="Horm. Metab. Res.">
        <title>Mouse glycine N-methyltransferase is sexually dimorphic and regulated by growth hormone.</title>
        <authorList>
            <person name="Aida K."/>
            <person name="Tawata M."/>
            <person name="Negishi M."/>
            <person name="Onaya T."/>
        </authorList>
    </citation>
    <scope>NUCLEOTIDE SEQUENCE [MRNA]</scope>
    <source>
        <tissue>Liver</tissue>
    </source>
</reference>
<reference key="2">
    <citation type="submission" date="2000-11" db="EMBL/GenBank/DDBJ databases">
        <title>Mouse glycine methyltransferase gene.</title>
        <authorList>
            <person name="Luka Z.A."/>
            <person name="Wagner C."/>
        </authorList>
    </citation>
    <scope>NUCLEOTIDE SEQUENCE [GENOMIC DNA]</scope>
    <source>
        <strain>129/SvJ</strain>
    </source>
</reference>
<reference key="3">
    <citation type="submission" date="2001-08" db="EMBL/GenBank/DDBJ databases">
        <title>Identification of the mouse GNMT and PEX6 genes.</title>
        <authorList>
            <person name="Chen Y.-M.A."/>
            <person name="Wang Y.-C."/>
            <person name="Liu S.-P."/>
            <person name="Lee C.-M."/>
            <person name="Tsai T.-F."/>
        </authorList>
    </citation>
    <scope>NUCLEOTIDE SEQUENCE [GENOMIC DNA]</scope>
    <source>
        <strain>129/SvEv</strain>
    </source>
</reference>
<reference key="4">
    <citation type="journal article" date="2004" name="Genome Res.">
        <title>The status, quality, and expansion of the NIH full-length cDNA project: the Mammalian Gene Collection (MGC).</title>
        <authorList>
            <consortium name="The MGC Project Team"/>
        </authorList>
    </citation>
    <scope>NUCLEOTIDE SEQUENCE [LARGE SCALE MRNA]</scope>
    <source>
        <strain>FVB/N</strain>
        <tissue>Liver</tissue>
    </source>
</reference>
<reference key="5">
    <citation type="journal article" date="2007" name="Proc. Natl. Acad. Sci. U.S.A.">
        <title>Large-scale phosphorylation analysis of mouse liver.</title>
        <authorList>
            <person name="Villen J."/>
            <person name="Beausoleil S.A."/>
            <person name="Gerber S.A."/>
            <person name="Gygi S.P."/>
        </authorList>
    </citation>
    <scope>PHOSPHORYLATION [LARGE SCALE ANALYSIS] AT SER-10</scope>
    <scope>IDENTIFICATION BY MASS SPECTROMETRY [LARGE SCALE ANALYSIS]</scope>
    <source>
        <tissue>Liver</tissue>
    </source>
</reference>
<reference key="6">
    <citation type="journal article" date="2010" name="Cell">
        <title>A tissue-specific atlas of mouse protein phosphorylation and expression.</title>
        <authorList>
            <person name="Huttlin E.L."/>
            <person name="Jedrychowski M.P."/>
            <person name="Elias J.E."/>
            <person name="Goswami T."/>
            <person name="Rad R."/>
            <person name="Beausoleil S.A."/>
            <person name="Villen J."/>
            <person name="Haas W."/>
            <person name="Sowa M.E."/>
            <person name="Gygi S.P."/>
        </authorList>
    </citation>
    <scope>PHOSPHORYLATION [LARGE SCALE ANALYSIS] AT SER-10 AND TYR-34</scope>
    <scope>IDENTIFICATION BY MASS SPECTROMETRY [LARGE SCALE ANALYSIS]</scope>
    <source>
        <tissue>Liver</tissue>
        <tissue>Pancreas</tissue>
    </source>
</reference>
<reference key="7">
    <citation type="journal article" date="2013" name="Mol. Cell">
        <title>SIRT5-mediated lysine desuccinylation impacts diverse metabolic pathways.</title>
        <authorList>
            <person name="Park J."/>
            <person name="Chen Y."/>
            <person name="Tishkoff D.X."/>
            <person name="Peng C."/>
            <person name="Tan M."/>
            <person name="Dai L."/>
            <person name="Xie Z."/>
            <person name="Zhang Y."/>
            <person name="Zwaans B.M."/>
            <person name="Skinner M.E."/>
            <person name="Lombard D.B."/>
            <person name="Zhao Y."/>
        </authorList>
    </citation>
    <scope>SUCCINYLATION [LARGE SCALE ANALYSIS] AT LYS-46; LYS-191; LYS-196 AND LYS-201</scope>
    <scope>IDENTIFICATION BY MASS SPECTROMETRY [LARGE SCALE ANALYSIS]</scope>
    <source>
        <tissue>Liver</tissue>
    </source>
</reference>
<reference key="8">
    <citation type="journal article" date="2004" name="Proteins">
        <title>Glycine N-methyltransferases: a comparison of the crystal structures and kinetic properties of recombinant human, mouse and rat enzymes.</title>
        <authorList>
            <person name="Pakhomova S."/>
            <person name="Luka Z."/>
            <person name="Grohmann S."/>
            <person name="Wagner C."/>
            <person name="Newcomer M.E."/>
        </authorList>
    </citation>
    <scope>X-RAY CRYSTALLOGRAPHY (2.95 ANGSTROMS) OF 2-293</scope>
    <scope>SUBUNIT</scope>
    <scope>FUNCTION</scope>
    <scope>CATALYTIC ACTIVITY</scope>
    <scope>BIOPHYSICOCHEMICAL PROPERTIES</scope>
</reference>
<reference key="9">
    <citation type="journal article" date="2006" name="Transgenic Res.">
        <title>A glycine N-methyltransferase knockout mouse model for humans with deficiency of this enzyme.</title>
        <authorList>
            <person name="Luka Z."/>
            <person name="Capdevila A."/>
            <person name="Mato J.M."/>
            <person name="Wagner C."/>
        </authorList>
    </citation>
    <scope>DISRUPTION PHENOTYPE</scope>
    <scope>FUNCTION</scope>
</reference>
<keyword id="KW-0002">3D-structure</keyword>
<keyword id="KW-0007">Acetylation</keyword>
<keyword id="KW-0963">Cytoplasm</keyword>
<keyword id="KW-0290">Folate-binding</keyword>
<keyword id="KW-0489">Methyltransferase</keyword>
<keyword id="KW-0597">Phosphoprotein</keyword>
<keyword id="KW-1185">Reference proteome</keyword>
<keyword id="KW-0949">S-adenosyl-L-methionine</keyword>
<keyword id="KW-0808">Transferase</keyword>
<accession>Q9QXF8</accession>
<accession>Q91WN7</accession>
<name>GNMT_MOUSE</name>
<organism>
    <name type="scientific">Mus musculus</name>
    <name type="common">Mouse</name>
    <dbReference type="NCBI Taxonomy" id="10090"/>
    <lineage>
        <taxon>Eukaryota</taxon>
        <taxon>Metazoa</taxon>
        <taxon>Chordata</taxon>
        <taxon>Craniata</taxon>
        <taxon>Vertebrata</taxon>
        <taxon>Euteleostomi</taxon>
        <taxon>Mammalia</taxon>
        <taxon>Eutheria</taxon>
        <taxon>Euarchontoglires</taxon>
        <taxon>Glires</taxon>
        <taxon>Rodentia</taxon>
        <taxon>Myomorpha</taxon>
        <taxon>Muroidea</taxon>
        <taxon>Muridae</taxon>
        <taxon>Murinae</taxon>
        <taxon>Mus</taxon>
        <taxon>Mus</taxon>
    </lineage>
</organism>
<proteinExistence type="evidence at protein level"/>
<protein>
    <recommendedName>
        <fullName>Glycine N-methyltransferase</fullName>
        <ecNumber evidence="3">2.1.1.20</ecNumber>
    </recommendedName>
</protein>
<gene>
    <name type="primary">Gnmt</name>
</gene>
<evidence type="ECO:0000250" key="1">
    <source>
        <dbReference type="UniProtKB" id="P13255"/>
    </source>
</evidence>
<evidence type="ECO:0000255" key="2">
    <source>
        <dbReference type="PROSITE-ProRule" id="PRU00932"/>
    </source>
</evidence>
<evidence type="ECO:0000269" key="3">
    <source>
    </source>
</evidence>
<evidence type="ECO:0000269" key="4">
    <source>
    </source>
</evidence>
<evidence type="ECO:0000305" key="5"/>
<evidence type="ECO:0000305" key="6">
    <source>
    </source>
</evidence>
<evidence type="ECO:0007744" key="7">
    <source>
    </source>
</evidence>
<evidence type="ECO:0007744" key="8">
    <source>
    </source>
</evidence>
<evidence type="ECO:0007744" key="9">
    <source>
    </source>
</evidence>
<evidence type="ECO:0007829" key="10">
    <source>
        <dbReference type="PDB" id="1R8X"/>
    </source>
</evidence>
<evidence type="ECO:0007829" key="11">
    <source>
        <dbReference type="PDB" id="1R8Y"/>
    </source>
</evidence>
<dbReference type="EC" id="2.1.1.20" evidence="3"/>
<dbReference type="EMBL" id="D89664">
    <property type="protein sequence ID" value="BAA88218.1"/>
    <property type="molecule type" value="mRNA"/>
</dbReference>
<dbReference type="EMBL" id="AF325352">
    <property type="protein sequence ID" value="AAK00338.1"/>
    <property type="molecule type" value="Genomic_DNA"/>
</dbReference>
<dbReference type="EMBL" id="AY054408">
    <property type="protein sequence ID" value="AAL06142.1"/>
    <property type="molecule type" value="Genomic_DNA"/>
</dbReference>
<dbReference type="EMBL" id="BC014283">
    <property type="protein sequence ID" value="AAH14283.1"/>
    <property type="molecule type" value="mRNA"/>
</dbReference>
<dbReference type="CCDS" id="CCDS28838.1"/>
<dbReference type="RefSeq" id="NP_034451.1">
    <property type="nucleotide sequence ID" value="NM_010321.1"/>
</dbReference>
<dbReference type="PDB" id="1R8X">
    <property type="method" value="X-ray"/>
    <property type="resolution" value="2.95 A"/>
    <property type="chains" value="A/B=2-293"/>
</dbReference>
<dbReference type="PDB" id="1R8Y">
    <property type="method" value="X-ray"/>
    <property type="resolution" value="3.00 A"/>
    <property type="chains" value="A/B/C/D/E/F/G/H=2-293"/>
</dbReference>
<dbReference type="PDBsum" id="1R8X"/>
<dbReference type="PDBsum" id="1R8Y"/>
<dbReference type="SMR" id="Q9QXF8"/>
<dbReference type="BioGRID" id="199995">
    <property type="interactions" value="1"/>
</dbReference>
<dbReference type="FunCoup" id="Q9QXF8">
    <property type="interactions" value="388"/>
</dbReference>
<dbReference type="STRING" id="10090.ENSMUSP00000002846"/>
<dbReference type="GlyGen" id="Q9QXF8">
    <property type="glycosylation" value="1 site, 1 O-linked glycan (1 site)"/>
</dbReference>
<dbReference type="iPTMnet" id="Q9QXF8"/>
<dbReference type="PhosphoSitePlus" id="Q9QXF8"/>
<dbReference type="SwissPalm" id="Q9QXF8"/>
<dbReference type="jPOST" id="Q9QXF8"/>
<dbReference type="PaxDb" id="10090-ENSMUSP00000002846"/>
<dbReference type="PeptideAtlas" id="Q9QXF8"/>
<dbReference type="ProteomicsDB" id="267738"/>
<dbReference type="Antibodypedia" id="16133">
    <property type="antibodies" value="349 antibodies from 30 providers"/>
</dbReference>
<dbReference type="DNASU" id="14711"/>
<dbReference type="Ensembl" id="ENSMUST00000002846.9">
    <property type="protein sequence ID" value="ENSMUSP00000002846.9"/>
    <property type="gene ID" value="ENSMUSG00000002769.10"/>
</dbReference>
<dbReference type="GeneID" id="14711"/>
<dbReference type="KEGG" id="mmu:14711"/>
<dbReference type="UCSC" id="uc008cue.1">
    <property type="organism name" value="mouse"/>
</dbReference>
<dbReference type="AGR" id="MGI:1202304"/>
<dbReference type="CTD" id="27232"/>
<dbReference type="MGI" id="MGI:1202304">
    <property type="gene designation" value="Gnmt"/>
</dbReference>
<dbReference type="VEuPathDB" id="HostDB:ENSMUSG00000002769"/>
<dbReference type="eggNOG" id="ENOG502QRN6">
    <property type="taxonomic scope" value="Eukaryota"/>
</dbReference>
<dbReference type="GeneTree" id="ENSGT00390000006845"/>
<dbReference type="HOGENOM" id="CLU_069129_0_0_1"/>
<dbReference type="InParanoid" id="Q9QXF8"/>
<dbReference type="OMA" id="LETGCAP"/>
<dbReference type="OrthoDB" id="3647at2759"/>
<dbReference type="PhylomeDB" id="Q9QXF8"/>
<dbReference type="TreeFam" id="TF324814"/>
<dbReference type="BRENDA" id="2.1.1.20">
    <property type="organism ID" value="3474"/>
</dbReference>
<dbReference type="Reactome" id="R-MMU-389661">
    <property type="pathway name" value="Glyoxylate metabolism and glycine degradation"/>
</dbReference>
<dbReference type="BioGRID-ORCS" id="14711">
    <property type="hits" value="1 hit in 78 CRISPR screens"/>
</dbReference>
<dbReference type="ChiTaRS" id="Gnmt">
    <property type="organism name" value="mouse"/>
</dbReference>
<dbReference type="EvolutionaryTrace" id="Q9QXF8"/>
<dbReference type="PRO" id="PR:Q9QXF8"/>
<dbReference type="Proteomes" id="UP000000589">
    <property type="component" value="Chromosome 17"/>
</dbReference>
<dbReference type="RNAct" id="Q9QXF8">
    <property type="molecule type" value="protein"/>
</dbReference>
<dbReference type="Bgee" id="ENSMUSG00000002769">
    <property type="expression patterns" value="Expressed in left lobe of liver and 121 other cell types or tissues"/>
</dbReference>
<dbReference type="GO" id="GO:0005829">
    <property type="term" value="C:cytosol"/>
    <property type="evidence" value="ECO:0000250"/>
    <property type="project" value="UniProtKB"/>
</dbReference>
<dbReference type="GO" id="GO:0005542">
    <property type="term" value="F:folic acid binding"/>
    <property type="evidence" value="ECO:0007669"/>
    <property type="project" value="UniProtKB-KW"/>
</dbReference>
<dbReference type="GO" id="GO:0016594">
    <property type="term" value="F:glycine binding"/>
    <property type="evidence" value="ECO:0000314"/>
    <property type="project" value="UniProtKB"/>
</dbReference>
<dbReference type="GO" id="GO:0017174">
    <property type="term" value="F:glycine N-methyltransferase activity"/>
    <property type="evidence" value="ECO:0000314"/>
    <property type="project" value="UniProtKB"/>
</dbReference>
<dbReference type="GO" id="GO:0042802">
    <property type="term" value="F:identical protein binding"/>
    <property type="evidence" value="ECO:0007669"/>
    <property type="project" value="Ensembl"/>
</dbReference>
<dbReference type="GO" id="GO:0005977">
    <property type="term" value="P:glycogen metabolic process"/>
    <property type="evidence" value="ECO:0000315"/>
    <property type="project" value="MGI"/>
</dbReference>
<dbReference type="GO" id="GO:0006555">
    <property type="term" value="P:methionine metabolic process"/>
    <property type="evidence" value="ECO:0000315"/>
    <property type="project" value="MGI"/>
</dbReference>
<dbReference type="GO" id="GO:0032259">
    <property type="term" value="P:methylation"/>
    <property type="evidence" value="ECO:0007669"/>
    <property type="project" value="UniProtKB-KW"/>
</dbReference>
<dbReference type="GO" id="GO:0006730">
    <property type="term" value="P:one-carbon metabolic process"/>
    <property type="evidence" value="ECO:0000315"/>
    <property type="project" value="MGI"/>
</dbReference>
<dbReference type="GO" id="GO:0051289">
    <property type="term" value="P:protein homotetramerization"/>
    <property type="evidence" value="ECO:0000353"/>
    <property type="project" value="UniProtKB"/>
</dbReference>
<dbReference type="GO" id="GO:0006111">
    <property type="term" value="P:regulation of gluconeogenesis"/>
    <property type="evidence" value="ECO:0000315"/>
    <property type="project" value="MGI"/>
</dbReference>
<dbReference type="GO" id="GO:0046500">
    <property type="term" value="P:S-adenosylmethionine metabolic process"/>
    <property type="evidence" value="ECO:0000314"/>
    <property type="project" value="UniProtKB"/>
</dbReference>
<dbReference type="CDD" id="cd02440">
    <property type="entry name" value="AdoMet_MTases"/>
    <property type="match status" value="1"/>
</dbReference>
<dbReference type="FunFam" id="3.30.46.10:FF:000001">
    <property type="entry name" value="Glycine N-methyltransferase"/>
    <property type="match status" value="1"/>
</dbReference>
<dbReference type="FunFam" id="3.40.50.150:FF:000113">
    <property type="entry name" value="Glycine N-methyltransferase"/>
    <property type="match status" value="1"/>
</dbReference>
<dbReference type="Gene3D" id="3.30.46.10">
    <property type="entry name" value="Glycine N-methyltransferase, chain A, domain 1"/>
    <property type="match status" value="1"/>
</dbReference>
<dbReference type="Gene3D" id="3.40.50.150">
    <property type="entry name" value="Vaccinia Virus protein VP39"/>
    <property type="match status" value="1"/>
</dbReference>
<dbReference type="InterPro" id="IPR014369">
    <property type="entry name" value="Gly/Sar_N_MeTrfase"/>
</dbReference>
<dbReference type="InterPro" id="IPR025714">
    <property type="entry name" value="Methyltranfer_dom"/>
</dbReference>
<dbReference type="InterPro" id="IPR029063">
    <property type="entry name" value="SAM-dependent_MTases_sf"/>
</dbReference>
<dbReference type="PANTHER" id="PTHR16458">
    <property type="entry name" value="GLYCINE N-METHYLTRANSFERASE"/>
    <property type="match status" value="1"/>
</dbReference>
<dbReference type="PANTHER" id="PTHR16458:SF2">
    <property type="entry name" value="GLYCINE N-METHYLTRANSFERASE"/>
    <property type="match status" value="1"/>
</dbReference>
<dbReference type="Pfam" id="PF13847">
    <property type="entry name" value="Methyltransf_31"/>
    <property type="match status" value="1"/>
</dbReference>
<dbReference type="PIRSF" id="PIRSF000385">
    <property type="entry name" value="Gly_N-mtase"/>
    <property type="match status" value="1"/>
</dbReference>
<dbReference type="SUPFAM" id="SSF53335">
    <property type="entry name" value="S-adenosyl-L-methionine-dependent methyltransferases"/>
    <property type="match status" value="1"/>
</dbReference>
<dbReference type="PROSITE" id="PS51600">
    <property type="entry name" value="SAM_GNMT"/>
    <property type="match status" value="1"/>
</dbReference>
<feature type="initiator methionine" description="Removed" evidence="1">
    <location>
        <position position="1"/>
    </location>
</feature>
<feature type="chain" id="PRO_0000087525" description="Glycine N-methyltransferase">
    <location>
        <begin position="2"/>
        <end position="293"/>
    </location>
</feature>
<feature type="binding site" evidence="1">
    <location>
        <position position="4"/>
    </location>
    <ligand>
        <name>(6S)-5-methyl-5,6,7,8-tetrahydrofolate</name>
        <dbReference type="ChEBI" id="CHEBI:18608"/>
        <label>1</label>
        <note>ligand shared between tetrameric partners</note>
    </ligand>
</feature>
<feature type="binding site" evidence="1">
    <location>
        <position position="6"/>
    </location>
    <ligand>
        <name>(6S)-5-methyl-5,6,7,8-tetrahydrofolate</name>
        <dbReference type="ChEBI" id="CHEBI:18608"/>
        <label>1</label>
        <note>ligand shared between tetrameric partners</note>
    </ligand>
</feature>
<feature type="binding site" evidence="1">
    <location>
        <position position="6"/>
    </location>
    <ligand>
        <name>(6S)-5-methyl-5,6,7,8-tetrahydrofolate</name>
        <dbReference type="ChEBI" id="CHEBI:18608"/>
        <label>2</label>
        <note>ligand shared between tetrameric partners</note>
    </ligand>
</feature>
<feature type="binding site" evidence="1">
    <location>
        <position position="22"/>
    </location>
    <ligand>
        <name>S-adenosyl-L-methionine</name>
        <dbReference type="ChEBI" id="CHEBI:59789"/>
    </ligand>
</feature>
<feature type="binding site" evidence="1">
    <location>
        <position position="31"/>
    </location>
    <ligand>
        <name>S-adenosyl-L-methionine</name>
        <dbReference type="ChEBI" id="CHEBI:59789"/>
    </ligand>
</feature>
<feature type="binding site" evidence="1">
    <location>
        <position position="34"/>
    </location>
    <ligand>
        <name>S-adenosyl-L-methionine</name>
        <dbReference type="ChEBI" id="CHEBI:59789"/>
    </ligand>
</feature>
<feature type="binding site" evidence="1">
    <location>
        <position position="41"/>
    </location>
    <ligand>
        <name>S-adenosyl-L-methionine</name>
        <dbReference type="ChEBI" id="CHEBI:59789"/>
    </ligand>
</feature>
<feature type="binding site" evidence="1">
    <location>
        <position position="65"/>
    </location>
    <ligand>
        <name>S-adenosyl-L-methionine</name>
        <dbReference type="ChEBI" id="CHEBI:59789"/>
    </ligand>
</feature>
<feature type="binding site" evidence="1">
    <location>
        <begin position="86"/>
        <end position="88"/>
    </location>
    <ligand>
        <name>S-adenosyl-L-methionine</name>
        <dbReference type="ChEBI" id="CHEBI:59789"/>
    </ligand>
</feature>
<feature type="binding site" evidence="1">
    <location>
        <begin position="117"/>
        <end position="118"/>
    </location>
    <ligand>
        <name>S-adenosyl-L-methionine</name>
        <dbReference type="ChEBI" id="CHEBI:59789"/>
    </ligand>
</feature>
<feature type="binding site" evidence="1">
    <location>
        <begin position="137"/>
        <end position="140"/>
    </location>
    <ligand>
        <name>S-adenosyl-L-methionine</name>
        <dbReference type="ChEBI" id="CHEBI:59789"/>
    </ligand>
</feature>
<feature type="binding site" evidence="1">
    <location>
        <position position="137"/>
    </location>
    <ligand>
        <name>S-adenosyl-L-methionine</name>
        <dbReference type="ChEBI" id="CHEBI:59789"/>
    </ligand>
</feature>
<feature type="binding site" evidence="1">
    <location>
        <position position="176"/>
    </location>
    <ligand>
        <name>S-adenosyl-L-methionine</name>
        <dbReference type="ChEBI" id="CHEBI:59789"/>
    </ligand>
</feature>
<feature type="binding site" evidence="1">
    <location>
        <position position="215"/>
    </location>
    <ligand>
        <name>(6S)-5-methyl-5,6,7,8-tetrahydrofolate</name>
        <dbReference type="ChEBI" id="CHEBI:18608"/>
        <label>2</label>
        <note>ligand shared between tetrameric partners</note>
    </ligand>
</feature>
<feature type="binding site" evidence="1">
    <location>
        <position position="221"/>
    </location>
    <ligand>
        <name>S-adenosyl-L-methionine</name>
        <dbReference type="ChEBI" id="CHEBI:59789"/>
    </ligand>
</feature>
<feature type="binding site" evidence="1">
    <location>
        <position position="240"/>
    </location>
    <ligand>
        <name>(6S)-5-methyl-5,6,7,8-tetrahydrofolate</name>
        <dbReference type="ChEBI" id="CHEBI:18608"/>
        <label>1</label>
        <note>ligand shared between tetrameric partners</note>
    </ligand>
</feature>
<feature type="binding site" evidence="1">
    <location>
        <position position="240"/>
    </location>
    <ligand>
        <name>(6S)-5-methyl-5,6,7,8-tetrahydrofolate</name>
        <dbReference type="ChEBI" id="CHEBI:18608"/>
        <label>2</label>
        <note>ligand shared between tetrameric partners</note>
    </ligand>
</feature>
<feature type="modified residue" description="N-acetylvaline" evidence="1">
    <location>
        <position position="2"/>
    </location>
</feature>
<feature type="modified residue" description="Phosphoserine" evidence="7 8">
    <location>
        <position position="10"/>
    </location>
</feature>
<feature type="modified residue" description="Phosphotyrosine" evidence="8">
    <location>
        <position position="34"/>
    </location>
</feature>
<feature type="modified residue" description="N6-succinyllysine" evidence="9">
    <location>
        <position position="46"/>
    </location>
</feature>
<feature type="modified residue" description="N6-succinyllysine" evidence="9">
    <location>
        <position position="191"/>
    </location>
</feature>
<feature type="modified residue" description="N6-succinyllysine" evidence="9">
    <location>
        <position position="196"/>
    </location>
</feature>
<feature type="modified residue" description="N6-succinyllysine" evidence="9">
    <location>
        <position position="201"/>
    </location>
</feature>
<feature type="sequence conflict" description="In Ref. 4; AAH14283." evidence="5" ref="4">
    <original>A</original>
    <variation>E</variation>
    <location>
        <position position="157"/>
    </location>
</feature>
<feature type="strand" evidence="11">
    <location>
        <begin position="16"/>
        <end position="18"/>
    </location>
</feature>
<feature type="turn" evidence="10">
    <location>
        <begin position="21"/>
        <end position="24"/>
    </location>
</feature>
<feature type="helix" evidence="10">
    <location>
        <begin position="26"/>
        <end position="35"/>
    </location>
</feature>
<feature type="strand" evidence="10">
    <location>
        <begin position="39"/>
        <end position="41"/>
    </location>
</feature>
<feature type="helix" evidence="10">
    <location>
        <begin position="43"/>
        <end position="55"/>
    </location>
</feature>
<feature type="strand" evidence="10">
    <location>
        <begin position="60"/>
        <end position="65"/>
    </location>
</feature>
<feature type="helix" evidence="10">
    <location>
        <begin position="70"/>
        <end position="77"/>
    </location>
</feature>
<feature type="strand" evidence="10">
    <location>
        <begin position="81"/>
        <end position="87"/>
    </location>
</feature>
<feature type="helix" evidence="10">
    <location>
        <begin position="89"/>
        <end position="101"/>
    </location>
</feature>
<feature type="turn" evidence="10">
    <location>
        <begin position="102"/>
        <end position="104"/>
    </location>
</feature>
<feature type="helix" evidence="10">
    <location>
        <begin position="106"/>
        <end position="109"/>
    </location>
</feature>
<feature type="strand" evidence="10">
    <location>
        <begin position="112"/>
        <end position="115"/>
    </location>
</feature>
<feature type="helix" evidence="10">
    <location>
        <begin position="118"/>
        <end position="120"/>
    </location>
</feature>
<feature type="helix" evidence="10">
    <location>
        <begin position="122"/>
        <end position="124"/>
    </location>
</feature>
<feature type="strand" evidence="10">
    <location>
        <begin position="131"/>
        <end position="136"/>
    </location>
</feature>
<feature type="helix" evidence="10">
    <location>
        <begin position="141"/>
        <end position="143"/>
    </location>
</feature>
<feature type="strand" evidence="10">
    <location>
        <begin position="148"/>
        <end position="151"/>
    </location>
</feature>
<feature type="helix" evidence="10">
    <location>
        <begin position="152"/>
        <end position="162"/>
    </location>
</feature>
<feature type="strand" evidence="10">
    <location>
        <begin position="165"/>
        <end position="176"/>
    </location>
</feature>
<feature type="helix" evidence="10">
    <location>
        <begin position="178"/>
        <end position="184"/>
    </location>
</feature>
<feature type="strand" evidence="10">
    <location>
        <begin position="193"/>
        <end position="195"/>
    </location>
</feature>
<feature type="strand" evidence="10">
    <location>
        <begin position="201"/>
        <end position="210"/>
    </location>
</feature>
<feature type="strand" evidence="10">
    <location>
        <begin position="213"/>
        <end position="224"/>
    </location>
</feature>
<feature type="strand" evidence="10">
    <location>
        <begin position="236"/>
        <end position="243"/>
    </location>
</feature>
<feature type="helix" evidence="10">
    <location>
        <begin position="248"/>
        <end position="257"/>
    </location>
</feature>
<feature type="turn" evidence="10">
    <location>
        <begin position="258"/>
        <end position="261"/>
    </location>
</feature>
<feature type="strand" evidence="10">
    <location>
        <begin position="263"/>
        <end position="273"/>
    </location>
</feature>
<feature type="strand" evidence="10">
    <location>
        <begin position="283"/>
        <end position="291"/>
    </location>
</feature>